<dbReference type="EMBL" id="AF068780">
    <property type="protein sequence ID" value="AAC24228.1"/>
    <property type="molecule type" value="mRNA"/>
</dbReference>
<dbReference type="EMBL" id="BC020061">
    <property type="protein sequence ID" value="AAH20061.1"/>
    <property type="molecule type" value="mRNA"/>
</dbReference>
<dbReference type="CCDS" id="CCDS26378.1"/>
<dbReference type="RefSeq" id="NP_065592.1">
    <property type="nucleotide sequence ID" value="NM_020567.2"/>
</dbReference>
<dbReference type="RefSeq" id="XP_006516786.1">
    <property type="nucleotide sequence ID" value="XM_006516723.4"/>
</dbReference>
<dbReference type="RefSeq" id="XP_036013994.1">
    <property type="nucleotide sequence ID" value="XM_036158101.1"/>
</dbReference>
<dbReference type="PDB" id="2ZXX">
    <property type="method" value="X-ray"/>
    <property type="resolution" value="2.80 A"/>
    <property type="chains" value="A/B/D/E=79-157"/>
</dbReference>
<dbReference type="PDBsum" id="2ZXX"/>
<dbReference type="SMR" id="O88513"/>
<dbReference type="BioGRID" id="208298">
    <property type="interactions" value="18"/>
</dbReference>
<dbReference type="DIP" id="DIP-32562N"/>
<dbReference type="FunCoup" id="O88513">
    <property type="interactions" value="1699"/>
</dbReference>
<dbReference type="IntAct" id="O88513">
    <property type="interactions" value="16"/>
</dbReference>
<dbReference type="STRING" id="10090.ENSMUSP00000006898"/>
<dbReference type="iPTMnet" id="O88513"/>
<dbReference type="PhosphoSitePlus" id="O88513"/>
<dbReference type="jPOST" id="O88513"/>
<dbReference type="PaxDb" id="10090-ENSMUSP00000006898"/>
<dbReference type="ProteomicsDB" id="272955"/>
<dbReference type="Pumba" id="O88513"/>
<dbReference type="Antibodypedia" id="25345">
    <property type="antibodies" value="441 antibodies from 35 providers"/>
</dbReference>
<dbReference type="DNASU" id="57441"/>
<dbReference type="Ensembl" id="ENSMUST00000006898.10">
    <property type="protein sequence ID" value="ENSMUSP00000006898.4"/>
    <property type="gene ID" value="ENSMUSG00000006715.12"/>
</dbReference>
<dbReference type="Ensembl" id="ENSMUST00000110382.9">
    <property type="protein sequence ID" value="ENSMUSP00000106011.3"/>
    <property type="gene ID" value="ENSMUSG00000006715.12"/>
</dbReference>
<dbReference type="GeneID" id="57441"/>
<dbReference type="KEGG" id="mmu:57441"/>
<dbReference type="UCSC" id="uc007pwg.1">
    <property type="organism name" value="mouse"/>
</dbReference>
<dbReference type="AGR" id="MGI:1927344"/>
<dbReference type="CTD" id="51053"/>
<dbReference type="MGI" id="MGI:1927344">
    <property type="gene designation" value="Gmnn"/>
</dbReference>
<dbReference type="VEuPathDB" id="HostDB:ENSMUSG00000006715"/>
<dbReference type="eggNOG" id="ENOG502SDC5">
    <property type="taxonomic scope" value="Eukaryota"/>
</dbReference>
<dbReference type="GeneTree" id="ENSGT00940000153270"/>
<dbReference type="InParanoid" id="O88513"/>
<dbReference type="OMA" id="HWNDQLI"/>
<dbReference type="OrthoDB" id="10043826at2759"/>
<dbReference type="PhylomeDB" id="O88513"/>
<dbReference type="TreeFam" id="TF101171"/>
<dbReference type="Reactome" id="R-MMU-68867">
    <property type="pathway name" value="Assembly of the pre-replicative complex"/>
</dbReference>
<dbReference type="Reactome" id="R-MMU-68962">
    <property type="pathway name" value="Activation of the pre-replicative complex"/>
</dbReference>
<dbReference type="Reactome" id="R-MMU-69052">
    <property type="pathway name" value="Switching of origins to a post-replicative state"/>
</dbReference>
<dbReference type="BioGRID-ORCS" id="57441">
    <property type="hits" value="19 hits in 81 CRISPR screens"/>
</dbReference>
<dbReference type="EvolutionaryTrace" id="O88513"/>
<dbReference type="PRO" id="PR:O88513"/>
<dbReference type="Proteomes" id="UP000000589">
    <property type="component" value="Chromosome 13"/>
</dbReference>
<dbReference type="RNAct" id="O88513">
    <property type="molecule type" value="protein"/>
</dbReference>
<dbReference type="Bgee" id="ENSMUSG00000006715">
    <property type="expression patterns" value="Expressed in primitive streak and 267 other cell types or tissues"/>
</dbReference>
<dbReference type="ExpressionAtlas" id="O88513">
    <property type="expression patterns" value="baseline and differential"/>
</dbReference>
<dbReference type="GO" id="GO:0005737">
    <property type="term" value="C:cytoplasm"/>
    <property type="evidence" value="ECO:0000250"/>
    <property type="project" value="UniProtKB"/>
</dbReference>
<dbReference type="GO" id="GO:0005829">
    <property type="term" value="C:cytosol"/>
    <property type="evidence" value="ECO:0007669"/>
    <property type="project" value="Ensembl"/>
</dbReference>
<dbReference type="GO" id="GO:0005654">
    <property type="term" value="C:nucleoplasm"/>
    <property type="evidence" value="ECO:0007669"/>
    <property type="project" value="Ensembl"/>
</dbReference>
<dbReference type="GO" id="GO:0005634">
    <property type="term" value="C:nucleus"/>
    <property type="evidence" value="ECO:0000314"/>
    <property type="project" value="MGI"/>
</dbReference>
<dbReference type="GO" id="GO:0017053">
    <property type="term" value="C:transcription repressor complex"/>
    <property type="evidence" value="ECO:0007669"/>
    <property type="project" value="Ensembl"/>
</dbReference>
<dbReference type="GO" id="GO:0003682">
    <property type="term" value="F:chromatin binding"/>
    <property type="evidence" value="ECO:0007669"/>
    <property type="project" value="Ensembl"/>
</dbReference>
<dbReference type="GO" id="GO:0140297">
    <property type="term" value="F:DNA-binding transcription factor binding"/>
    <property type="evidence" value="ECO:0000353"/>
    <property type="project" value="UniProtKB"/>
</dbReference>
<dbReference type="GO" id="GO:0042826">
    <property type="term" value="F:histone deacetylase binding"/>
    <property type="evidence" value="ECO:0000250"/>
    <property type="project" value="UniProtKB"/>
</dbReference>
<dbReference type="GO" id="GO:0003714">
    <property type="term" value="F:transcription corepressor activity"/>
    <property type="evidence" value="ECO:0000314"/>
    <property type="project" value="UniProtKB"/>
</dbReference>
<dbReference type="GO" id="GO:0009887">
    <property type="term" value="P:animal organ morphogenesis"/>
    <property type="evidence" value="ECO:0000314"/>
    <property type="project" value="MGI"/>
</dbReference>
<dbReference type="GO" id="GO:0071163">
    <property type="term" value="P:DNA replication preinitiation complex assembly"/>
    <property type="evidence" value="ECO:0007669"/>
    <property type="project" value="Ensembl"/>
</dbReference>
<dbReference type="GO" id="GO:0045786">
    <property type="term" value="P:negative regulation of cell cycle"/>
    <property type="evidence" value="ECO:0000314"/>
    <property type="project" value="UniProtKB"/>
</dbReference>
<dbReference type="GO" id="GO:0008156">
    <property type="term" value="P:negative regulation of DNA replication"/>
    <property type="evidence" value="ECO:0000314"/>
    <property type="project" value="UniProtKB"/>
</dbReference>
<dbReference type="GO" id="GO:2000104">
    <property type="term" value="P:negative regulation of DNA-templated DNA replication"/>
    <property type="evidence" value="ECO:0007669"/>
    <property type="project" value="Ensembl"/>
</dbReference>
<dbReference type="GO" id="GO:0045892">
    <property type="term" value="P:negative regulation of DNA-templated transcription"/>
    <property type="evidence" value="ECO:0000314"/>
    <property type="project" value="UniProtKB"/>
</dbReference>
<dbReference type="GO" id="GO:0065003">
    <property type="term" value="P:protein-containing complex assembly"/>
    <property type="evidence" value="ECO:0000314"/>
    <property type="project" value="UniProtKB"/>
</dbReference>
<dbReference type="GO" id="GO:0030174">
    <property type="term" value="P:regulation of DNA-templated DNA replication initiation"/>
    <property type="evidence" value="ECO:0007669"/>
    <property type="project" value="Ensembl"/>
</dbReference>
<dbReference type="GO" id="GO:0007346">
    <property type="term" value="P:regulation of mitotic cell cycle"/>
    <property type="evidence" value="ECO:0007669"/>
    <property type="project" value="Ensembl"/>
</dbReference>
<dbReference type="CDD" id="cd22589">
    <property type="entry name" value="geminin_CC"/>
    <property type="match status" value="1"/>
</dbReference>
<dbReference type="DisProt" id="DP02412"/>
<dbReference type="FunFam" id="1.20.5.1180:FF:000001">
    <property type="entry name" value="Truncated geminin"/>
    <property type="match status" value="1"/>
</dbReference>
<dbReference type="Gene3D" id="1.20.5.1180">
    <property type="entry name" value="Geminin coiled-coil domain"/>
    <property type="match status" value="1"/>
</dbReference>
<dbReference type="IDEAL" id="IID50306"/>
<dbReference type="InterPro" id="IPR022786">
    <property type="entry name" value="Geminin/Multicilin"/>
</dbReference>
<dbReference type="PANTHER" id="PTHR13372">
    <property type="entry name" value="GEMININ"/>
    <property type="match status" value="1"/>
</dbReference>
<dbReference type="PANTHER" id="PTHR13372:SF4">
    <property type="entry name" value="GEMININ"/>
    <property type="match status" value="1"/>
</dbReference>
<dbReference type="Pfam" id="PF07412">
    <property type="entry name" value="Geminin"/>
    <property type="match status" value="1"/>
</dbReference>
<dbReference type="SUPFAM" id="SSF111469">
    <property type="entry name" value="Geminin coiled-coil domain"/>
    <property type="match status" value="1"/>
</dbReference>
<organism>
    <name type="scientific">Mus musculus</name>
    <name type="common">Mouse</name>
    <dbReference type="NCBI Taxonomy" id="10090"/>
    <lineage>
        <taxon>Eukaryota</taxon>
        <taxon>Metazoa</taxon>
        <taxon>Chordata</taxon>
        <taxon>Craniata</taxon>
        <taxon>Vertebrata</taxon>
        <taxon>Euteleostomi</taxon>
        <taxon>Mammalia</taxon>
        <taxon>Eutheria</taxon>
        <taxon>Euarchontoglires</taxon>
        <taxon>Glires</taxon>
        <taxon>Rodentia</taxon>
        <taxon>Myomorpha</taxon>
        <taxon>Muroidea</taxon>
        <taxon>Muridae</taxon>
        <taxon>Murinae</taxon>
        <taxon>Mus</taxon>
        <taxon>Mus</taxon>
    </lineage>
</organism>
<keyword id="KW-0002">3D-structure</keyword>
<keyword id="KW-0007">Acetylation</keyword>
<keyword id="KW-0131">Cell cycle</keyword>
<keyword id="KW-0175">Coiled coil</keyword>
<keyword id="KW-0963">Cytoplasm</keyword>
<keyword id="KW-0236">DNA replication inhibitor</keyword>
<keyword id="KW-0539">Nucleus</keyword>
<keyword id="KW-0597">Phosphoprotein</keyword>
<keyword id="KW-1185">Reference proteome</keyword>
<gene>
    <name type="primary">Gmnn</name>
</gene>
<name>GEMI_MOUSE</name>
<evidence type="ECO:0000250" key="1"/>
<evidence type="ECO:0000250" key="2">
    <source>
        <dbReference type="UniProtKB" id="O75496"/>
    </source>
</evidence>
<evidence type="ECO:0000256" key="3">
    <source>
        <dbReference type="SAM" id="MobiDB-lite"/>
    </source>
</evidence>
<evidence type="ECO:0000269" key="4">
    <source>
    </source>
</evidence>
<evidence type="ECO:0000269" key="5">
    <source>
    </source>
</evidence>
<evidence type="ECO:0000269" key="6">
    <source>
    </source>
</evidence>
<evidence type="ECO:0000269" key="7">
    <source>
    </source>
</evidence>
<evidence type="ECO:0000305" key="8"/>
<evidence type="ECO:0007829" key="9">
    <source>
        <dbReference type="PDB" id="2ZXX"/>
    </source>
</evidence>
<feature type="chain" id="PRO_0000148730" description="Geminin">
    <location>
        <begin position="1"/>
        <end position="206"/>
    </location>
</feature>
<feature type="region of interest" description="Disordered" evidence="3">
    <location>
        <begin position="1"/>
        <end position="42"/>
    </location>
</feature>
<feature type="region of interest" description="Necessary and sufficient for interaction with IDAS and CDT1" evidence="1">
    <location>
        <begin position="79"/>
        <end position="158"/>
    </location>
</feature>
<feature type="region of interest" description="Disordered" evidence="3">
    <location>
        <begin position="157"/>
        <end position="206"/>
    </location>
</feature>
<feature type="region of interest" description="Homeodomain binding" evidence="1">
    <location>
        <begin position="167"/>
        <end position="187"/>
    </location>
</feature>
<feature type="coiled-coil region">
    <location>
        <begin position="91"/>
        <end position="141"/>
    </location>
</feature>
<feature type="compositionally biased region" description="Polar residues" evidence="3">
    <location>
        <begin position="1"/>
        <end position="18"/>
    </location>
</feature>
<feature type="compositionally biased region" description="Acidic residues" evidence="3">
    <location>
        <begin position="167"/>
        <end position="185"/>
    </location>
</feature>
<feature type="compositionally biased region" description="Polar residues" evidence="3">
    <location>
        <begin position="195"/>
        <end position="206"/>
    </location>
</feature>
<feature type="modified residue" description="N6-acetyllysine" evidence="2">
    <location>
        <position position="27"/>
    </location>
</feature>
<feature type="modified residue" description="Phosphoserine" evidence="2">
    <location>
        <position position="36"/>
    </location>
</feature>
<feature type="modified residue" description="Phosphoserine" evidence="2">
    <location>
        <position position="63"/>
    </location>
</feature>
<feature type="modified residue" description="Phosphoserine" evidence="2">
    <location>
        <position position="64"/>
    </location>
</feature>
<feature type="modified residue" description="Phosphoserine; by CK2" evidence="2">
    <location>
        <position position="181"/>
    </location>
</feature>
<feature type="turn" evidence="9">
    <location>
        <begin position="82"/>
        <end position="86"/>
    </location>
</feature>
<feature type="helix" evidence="9">
    <location>
        <begin position="95"/>
        <end position="136"/>
    </location>
</feature>
<feature type="helix" evidence="9">
    <location>
        <begin position="139"/>
        <end position="154"/>
    </location>
</feature>
<accession>O88513</accession>
<protein>
    <recommendedName>
        <fullName>Geminin</fullName>
    </recommendedName>
</protein>
<proteinExistence type="evidence at protein level"/>
<reference key="1">
    <citation type="journal article" date="1998" name="Cell">
        <title>Geminin, an inhibitor of DNA replication, is degraded during mitosis.</title>
        <authorList>
            <person name="McGarry T.J."/>
            <person name="Kirschner M.W."/>
        </authorList>
    </citation>
    <scope>NUCLEOTIDE SEQUENCE [MRNA]</scope>
    <scope>FUNCTION</scope>
    <scope>DEVELOPMENTAL STAGE</scope>
</reference>
<reference key="2">
    <citation type="journal article" date="2004" name="Genome Res.">
        <title>The status, quality, and expansion of the NIH full-length cDNA project: the Mammalian Gene Collection (MGC).</title>
        <authorList>
            <consortium name="The MGC Project Team"/>
        </authorList>
    </citation>
    <scope>NUCLEOTIDE SEQUENCE [LARGE SCALE MRNA]</scope>
</reference>
<reference key="3">
    <citation type="journal article" date="2002" name="J. Biol. Chem.">
        <title>Mouse geminin inhibits not only Cdt1-MCM6 interactions but also a novel intrinsic Cdt1 DNA binding activity.</title>
        <authorList>
            <person name="Yanagi K."/>
            <person name="Mizuno T."/>
            <person name="You Z."/>
            <person name="Hanaoka F."/>
        </authorList>
    </citation>
    <scope>FUNCTION</scope>
    <scope>INTERACTION WITH CDT1</scope>
</reference>
<reference key="4">
    <citation type="journal article" date="2005" name="J. Biol. Chem.">
        <title>Caenorhabditis elegans geminin homologue participates in cell cycle regulation and germ line development.</title>
        <authorList>
            <person name="Yanagi K."/>
            <person name="Mizuno T."/>
            <person name="Tsuyama T."/>
            <person name="Tada S."/>
            <person name="Iida Y."/>
            <person name="Sugimoto A."/>
            <person name="Eki T."/>
            <person name="Enomoto T."/>
            <person name="Hanaoka F."/>
        </authorList>
    </citation>
    <scope>INTERACTION WITH CDT1</scope>
</reference>
<reference key="5">
    <citation type="journal article" date="2010" name="Cell">
        <title>A tissue-specific atlas of mouse protein phosphorylation and expression.</title>
        <authorList>
            <person name="Huttlin E.L."/>
            <person name="Jedrychowski M.P."/>
            <person name="Elias J.E."/>
            <person name="Goswami T."/>
            <person name="Rad R."/>
            <person name="Beausoleil S.A."/>
            <person name="Villen J."/>
            <person name="Haas W."/>
            <person name="Sowa M.E."/>
            <person name="Gygi S.P."/>
        </authorList>
    </citation>
    <scope>IDENTIFICATION BY MASS SPECTROMETRY [LARGE SCALE ANALYSIS]</scope>
    <source>
        <tissue>Spleen</tissue>
        <tissue>Testis</tissue>
    </source>
</reference>
<reference key="6">
    <citation type="journal article" date="2004" name="Nature">
        <title>Structural basis for inhibition of the replication licensing factor Cdt1 by geminin.</title>
        <authorList>
            <person name="Lee C."/>
            <person name="Hong B."/>
            <person name="Choi J.M."/>
            <person name="Kim Y."/>
            <person name="Watanabe S."/>
            <person name="Ishimi Y."/>
            <person name="Enomoto T."/>
            <person name="Tada S."/>
            <person name="Kim Y."/>
            <person name="Cho Y."/>
        </authorList>
    </citation>
    <scope>X-RAY CRYSTALLOGRAPHY (2.8 ANGSTROMS) OF 79-157 IN COMPLEX WITH CDT1</scope>
    <scope>DOMAIN COILED COIL</scope>
    <scope>SUBUNIT</scope>
</reference>
<comment type="function">
    <text evidence="2 4 7">Inhibits DNA replication by preventing the incorporation of MCM complex into pre-replication complex (pre-RC) (PubMed:12192004, PubMed:9635433). It is degraded during the mitotic phase of the cell cycle. Its destruction at the metaphase-anaphase transition permits replication in the succeeding cell cycle (PubMed:12192004, PubMed:9635433). Inhibits histone acetyltransferase activity of KAT7/HBO1 in a CDT1-dependent manner, inhibiting histone H4 acetylation and DNA replication licensing (By similarity). Inhibits the transcriptional activity of a subset of Hox proteins, enrolling them in cell proliferative control (By similarity).</text>
</comment>
<comment type="subunit">
    <text evidence="2 4 5 6">Homotetramer (By similarity). Interacts with CDT1; this inhibits binding of the MCM complex to origins of replication (PubMed:12192004, PubMed:15286659, PubMed:15811859). The complex with CDT1 exists in two forms, a 'permissive' heterotrimer and an 'inhibitory' heterohexamer (By similarity). Interacts (via coiled-coil domain) with IDAS (via coiled-coil domain); this targets GMNN to the nucleus (By similarity). The heterodimer formed by GMNN and MCIDAS has much lower affinity for CDT1 than the GMNN homodimer (By similarity). Interacts with a subset of Hox proteins, affinity increasing from anterior to posterior types, the strongest interaction being with HOXB1, HOXC9 and HOXD10 (By similarity). Interacts with LRWD1 from G1/S to mitosis (By similarity).</text>
</comment>
<comment type="interaction">
    <interactant intactId="EBI-445922">
        <id>O88513</id>
    </interactant>
    <interactant intactId="EBI-457043">
        <id>Q8R4E9</id>
        <label>Cdt1</label>
    </interactant>
    <organismsDiffer>false</organismsDiffer>
    <experiments>3</experiments>
</comment>
<comment type="interaction">
    <interactant intactId="EBI-445922">
        <id>O88513</id>
    </interactant>
    <interactant intactId="EBI-445941">
        <id>P31311</id>
        <label>Hoxa11</label>
    </interactant>
    <organismsDiffer>false</organismsDiffer>
    <experiments>2</experiments>
</comment>
<comment type="interaction">
    <interactant intactId="EBI-445922">
        <id>O88513</id>
    </interactant>
    <interactant intactId="EBI-445929">
        <id>P28359</id>
        <label>Hoxd10</label>
    </interactant>
    <organismsDiffer>false</organismsDiffer>
    <experiments>2</experiments>
</comment>
<comment type="interaction">
    <interactant intactId="EBI-445922">
        <id>O88513</id>
    </interactant>
    <interactant intactId="EBI-445955">
        <id>Q8K214</id>
        <label>Scmh1</label>
    </interactant>
    <organismsDiffer>false</organismsDiffer>
    <experiments>2</experiments>
</comment>
<comment type="interaction">
    <interactant intactId="EBI-445922">
        <id>O88513</id>
    </interactant>
    <interactant intactId="EBI-15597718">
        <id>Q9JIZ5</id>
        <label>Tfap4</label>
    </interactant>
    <organismsDiffer>false</organismsDiffer>
    <experiments>2</experiments>
</comment>
<comment type="interaction">
    <interactant intactId="EBI-445922">
        <id>O88513</id>
    </interactant>
    <interactant intactId="EBI-80830">
        <id>Q9Y618</id>
        <label>NCOR2</label>
    </interactant>
    <organismsDiffer>true</organismsDiffer>
    <experiments>3</experiments>
</comment>
<comment type="subcellular location">
    <subcellularLocation>
        <location evidence="2">Cytoplasm</location>
    </subcellularLocation>
    <subcellularLocation>
        <location evidence="2">Nucleus</location>
    </subcellularLocation>
    <text evidence="2">Mainly cytoplasmic but can be relocalized to the nucleus.</text>
</comment>
<comment type="developmental stage">
    <text evidence="7">Absent during G1 phase, accumulates during S, G2, and M phases, and disappears at the time of the metaphase-anaphase transition.</text>
</comment>
<comment type="PTM">
    <text evidence="2">Phosphorylated during mitosis. Phosphorylation at Ser-181 by CK2 results in enhanced binding to Hox proteins and more potent inhibitory effect on Hox transcriptional activity.</text>
</comment>
<comment type="similarity">
    <text evidence="8">Belongs to the geminin family.</text>
</comment>
<sequence>MNLSMKQKQEGAQENVKNSPVPRRTLKMIQPSADGSLVGRENELPKGLFKRKLWDDQLASQTSSCGPEANENKDVGDLTQEAFDLISKENPSSQYWKEVAEQRRKALYEALKENEKLHKEIEQKDSEIARLRKENKDLAEVAEHVQYMAEVIERLSNEPLDNFESPDSQEFDSEEEAVEYSELEDSGAGTCAEETVSSSTDARPCT</sequence>